<dbReference type="EMBL" id="U82598">
    <property type="protein sequence ID" value="AAB40732.1"/>
    <property type="status" value="ALT_INIT"/>
    <property type="molecule type" value="Genomic_DNA"/>
</dbReference>
<dbReference type="EMBL" id="U00096">
    <property type="protein sequence ID" value="AAC73636.1"/>
    <property type="molecule type" value="Genomic_DNA"/>
</dbReference>
<dbReference type="EMBL" id="AP009048">
    <property type="protein sequence ID" value="BAE76311.1"/>
    <property type="molecule type" value="Genomic_DNA"/>
</dbReference>
<dbReference type="EMBL" id="X51662">
    <property type="status" value="NOT_ANNOTATED_CDS"/>
    <property type="molecule type" value="Genomic_DNA"/>
</dbReference>
<dbReference type="PIR" id="E64785">
    <property type="entry name" value="E64785"/>
</dbReference>
<dbReference type="RefSeq" id="NP_415067.1">
    <property type="nucleotide sequence ID" value="NC_000913.3"/>
</dbReference>
<dbReference type="RefSeq" id="WP_001255230.1">
    <property type="nucleotide sequence ID" value="NZ_SSZK01000024.1"/>
</dbReference>
<dbReference type="SMR" id="P38052"/>
<dbReference type="BioGRID" id="4263147">
    <property type="interactions" value="12"/>
</dbReference>
<dbReference type="FunCoup" id="P38052">
    <property type="interactions" value="74"/>
</dbReference>
<dbReference type="STRING" id="511145.b0534"/>
<dbReference type="PaxDb" id="511145-b0534"/>
<dbReference type="EnsemblBacteria" id="AAC73636">
    <property type="protein sequence ID" value="AAC73636"/>
    <property type="gene ID" value="b0534"/>
</dbReference>
<dbReference type="GeneID" id="944977"/>
<dbReference type="KEGG" id="ecj:JW5072"/>
<dbReference type="KEGG" id="eco:b0534"/>
<dbReference type="KEGG" id="ecoc:C3026_02620"/>
<dbReference type="PATRIC" id="fig|1411691.4.peg.1744"/>
<dbReference type="EchoBASE" id="EB2289"/>
<dbReference type="eggNOG" id="COG3539">
    <property type="taxonomic scope" value="Bacteria"/>
</dbReference>
<dbReference type="HOGENOM" id="CLU_088965_0_2_6"/>
<dbReference type="InParanoid" id="P38052"/>
<dbReference type="OMA" id="ATFMINY"/>
<dbReference type="OrthoDB" id="6693398at2"/>
<dbReference type="PhylomeDB" id="P38052"/>
<dbReference type="BioCyc" id="EcoCyc:EG12388-MONOMER"/>
<dbReference type="PRO" id="PR:P38052"/>
<dbReference type="Proteomes" id="UP000000625">
    <property type="component" value="Chromosome"/>
</dbReference>
<dbReference type="GO" id="GO:0009289">
    <property type="term" value="C:pilus"/>
    <property type="evidence" value="ECO:0000318"/>
    <property type="project" value="GO_Central"/>
</dbReference>
<dbReference type="GO" id="GO:0007155">
    <property type="term" value="P:cell adhesion"/>
    <property type="evidence" value="ECO:0000315"/>
    <property type="project" value="EcoCyc"/>
</dbReference>
<dbReference type="GO" id="GO:0043709">
    <property type="term" value="P:cell adhesion involved in single-species biofilm formation"/>
    <property type="evidence" value="ECO:0000318"/>
    <property type="project" value="GO_Central"/>
</dbReference>
<dbReference type="FunFam" id="2.60.40.1090:FF:000007">
    <property type="entry name" value="Fimbrial-like protein FimF"/>
    <property type="match status" value="1"/>
</dbReference>
<dbReference type="Gene3D" id="2.60.40.1090">
    <property type="entry name" value="Fimbrial-type adhesion domain"/>
    <property type="match status" value="1"/>
</dbReference>
<dbReference type="InterPro" id="IPR000259">
    <property type="entry name" value="Adhesion_dom_fimbrial"/>
</dbReference>
<dbReference type="InterPro" id="IPR036937">
    <property type="entry name" value="Adhesion_dom_fimbrial_sf"/>
</dbReference>
<dbReference type="InterPro" id="IPR008966">
    <property type="entry name" value="Adhesion_dom_sf"/>
</dbReference>
<dbReference type="InterPro" id="IPR050263">
    <property type="entry name" value="Bact_Fimbrial_Adh_Pro"/>
</dbReference>
<dbReference type="NCBIfam" id="NF007402">
    <property type="entry name" value="PRK09934.1"/>
    <property type="match status" value="1"/>
</dbReference>
<dbReference type="PANTHER" id="PTHR33420">
    <property type="entry name" value="FIMBRIAL SUBUNIT ELFA-RELATED"/>
    <property type="match status" value="1"/>
</dbReference>
<dbReference type="PANTHER" id="PTHR33420:SF4">
    <property type="entry name" value="FIMBRIAL-LIKE PROTEIN FIMF"/>
    <property type="match status" value="1"/>
</dbReference>
<dbReference type="Pfam" id="PF00419">
    <property type="entry name" value="Fimbrial"/>
    <property type="match status" value="1"/>
</dbReference>
<dbReference type="SUPFAM" id="SSF49401">
    <property type="entry name" value="Bacterial adhesins"/>
    <property type="match status" value="1"/>
</dbReference>
<name>SFMF_ECOLI</name>
<proteinExistence type="evidence at transcript level"/>
<reference key="1">
    <citation type="submission" date="1997-01" db="EMBL/GenBank/DDBJ databases">
        <title>Sequence of minutes 4-25 of Escherichia coli.</title>
        <authorList>
            <person name="Chung E."/>
            <person name="Allen E."/>
            <person name="Araujo R."/>
            <person name="Aparicio A.M."/>
            <person name="Davis K."/>
            <person name="Duncan M."/>
            <person name="Federspiel N."/>
            <person name="Hyman R."/>
            <person name="Kalman S."/>
            <person name="Komp C."/>
            <person name="Kurdi O."/>
            <person name="Lew H."/>
            <person name="Lin D."/>
            <person name="Namath A."/>
            <person name="Oefner P."/>
            <person name="Roberts D."/>
            <person name="Schramm S."/>
            <person name="Davis R.W."/>
        </authorList>
    </citation>
    <scope>NUCLEOTIDE SEQUENCE [LARGE SCALE GENOMIC DNA]</scope>
    <source>
        <strain>K12 / MG1655 / ATCC 47076</strain>
    </source>
</reference>
<reference key="2">
    <citation type="journal article" date="1997" name="Science">
        <title>The complete genome sequence of Escherichia coli K-12.</title>
        <authorList>
            <person name="Blattner F.R."/>
            <person name="Plunkett G. III"/>
            <person name="Bloch C.A."/>
            <person name="Perna N.T."/>
            <person name="Burland V."/>
            <person name="Riley M."/>
            <person name="Collado-Vides J."/>
            <person name="Glasner J.D."/>
            <person name="Rode C.K."/>
            <person name="Mayhew G.F."/>
            <person name="Gregor J."/>
            <person name="Davis N.W."/>
            <person name="Kirkpatrick H.A."/>
            <person name="Goeden M.A."/>
            <person name="Rose D.J."/>
            <person name="Mau B."/>
            <person name="Shao Y."/>
        </authorList>
    </citation>
    <scope>NUCLEOTIDE SEQUENCE [LARGE SCALE GENOMIC DNA]</scope>
    <source>
        <strain>K12 / MG1655 / ATCC 47076</strain>
    </source>
</reference>
<reference key="3">
    <citation type="journal article" date="2006" name="Mol. Syst. Biol.">
        <title>Highly accurate genome sequences of Escherichia coli K-12 strains MG1655 and W3110.</title>
        <authorList>
            <person name="Hayashi K."/>
            <person name="Morooka N."/>
            <person name="Yamamoto Y."/>
            <person name="Fujita K."/>
            <person name="Isono K."/>
            <person name="Choi S."/>
            <person name="Ohtsubo E."/>
            <person name="Baba T."/>
            <person name="Wanner B.L."/>
            <person name="Mori H."/>
            <person name="Horiuchi T."/>
        </authorList>
    </citation>
    <scope>NUCLEOTIDE SEQUENCE [LARGE SCALE GENOMIC DNA]</scope>
    <source>
        <strain>K12 / W3110 / ATCC 27325 / DSM 5911</strain>
    </source>
</reference>
<reference key="4">
    <citation type="journal article" date="1990" name="Mol. Gen. Genet.">
        <title>Nucleotide sequence of the region encompassing the int gene of a cryptic prophage and the DNA Y gene flanked by a curved DNA sequence of Escherichia coli K12.</title>
        <authorList>
            <person name="Muramatsu S."/>
            <person name="Mizuno T."/>
        </authorList>
    </citation>
    <scope>NUCLEOTIDE SEQUENCE [GENOMIC DNA] OF 119-171</scope>
    <source>
        <strain>K12</strain>
    </source>
</reference>
<reference key="5">
    <citation type="journal article" date="1994" name="Nucleic Acids Res.">
        <title>Intrinsic and extrinsic approaches for detecting genes in a bacterial genome.</title>
        <authorList>
            <person name="Borodovsky M."/>
            <person name="Rudd K.E."/>
            <person name="Koonin E.V."/>
        </authorList>
    </citation>
    <scope>IDENTIFICATION</scope>
</reference>
<reference key="6">
    <citation type="journal article" date="2010" name="Environ. Microbiol.">
        <title>Escherichia coli K-12 possesses multiple cryptic but functional chaperone-usher fimbriae with distinct surface specificities.</title>
        <authorList>
            <person name="Korea C.G."/>
            <person name="Badouraly R."/>
            <person name="Prevost M.C."/>
            <person name="Ghigo J.M."/>
            <person name="Beloin C."/>
        </authorList>
    </citation>
    <scope>FUNCTION</scope>
    <scope>INDUCTION</scope>
    <scope>DISRUPTION PHENOTYPE</scope>
    <source>
        <strain>K12 / MG1655 / ATCC 47076</strain>
    </source>
</reference>
<sequence>MRRVLFSCFCGLLWSSSGWAVDPLGTININLHGNVVDFSCTVNTADIDKTVDLGRWPTTQLLNAGDTTALVPFSLRLEGCPPGSVAILFTGTPASDTNLLALDDPAMAQTVAIELRNSDRSRLALGEASPTEEVDANGNVTLNFFANYRALASGVRPGVAKADAIFMINYN</sequence>
<gene>
    <name type="primary">sfmF</name>
    <name type="synonym">ybcG</name>
    <name type="ordered locus">b0534</name>
    <name type="ordered locus">JW5072</name>
</gene>
<comment type="function">
    <text evidence="3">Part of the sfmACDHF fimbrial operon. Could contribute to adhesion to various surfaces in specific environmental niches. Increases adhesion to eukaryotic T24 bladder epithelial cells in the absence of fim genes.</text>
</comment>
<comment type="subcellular location">
    <subcellularLocation>
        <location evidence="1">Fimbrium</location>
    </subcellularLocation>
</comment>
<comment type="induction">
    <text evidence="3">Expression is negatively regulated by H-NS and subjected to cAMP receptor protein (CRP)-mediated catabolite repression.</text>
</comment>
<comment type="disruption phenotype">
    <text evidence="3">Deletion of the operon under classical laboratory conditions does not result in any major effect on E.coli capacity to form biofilms compared with the wild-type strain.</text>
</comment>
<comment type="miscellaneous">
    <text evidence="5">The operon is cryptic under classical laboratory conditions, but is functional when constitutively expressed.</text>
</comment>
<comment type="similarity">
    <text evidence="4">Belongs to the fimbrial protein family.</text>
</comment>
<comment type="sequence caution" evidence="4">
    <conflict type="erroneous initiation">
        <sequence resource="EMBL-CDS" id="AAB40732"/>
    </conflict>
    <text>Extended N-terminus.</text>
</comment>
<organism>
    <name type="scientific">Escherichia coli (strain K12)</name>
    <dbReference type="NCBI Taxonomy" id="83333"/>
    <lineage>
        <taxon>Bacteria</taxon>
        <taxon>Pseudomonadati</taxon>
        <taxon>Pseudomonadota</taxon>
        <taxon>Gammaproteobacteria</taxon>
        <taxon>Enterobacterales</taxon>
        <taxon>Enterobacteriaceae</taxon>
        <taxon>Escherichia</taxon>
    </lineage>
</organism>
<feature type="signal peptide" evidence="2">
    <location>
        <begin position="1"/>
        <end position="20"/>
    </location>
</feature>
<feature type="chain" id="PRO_0000009208" description="Uncharacterized fimbrial-like protein SfmF">
    <location>
        <begin position="21"/>
        <end position="171"/>
    </location>
</feature>
<feature type="disulfide bond" evidence="2">
    <location>
        <begin position="40"/>
        <end position="80"/>
    </location>
</feature>
<evidence type="ECO:0000250" key="1"/>
<evidence type="ECO:0000255" key="2"/>
<evidence type="ECO:0000269" key="3">
    <source>
    </source>
</evidence>
<evidence type="ECO:0000305" key="4"/>
<evidence type="ECO:0000305" key="5">
    <source>
    </source>
</evidence>
<accession>P38052</accession>
<accession>P75716</accession>
<accession>P77079</accession>
<accession>Q2MBP5</accession>
<keyword id="KW-1015">Disulfide bond</keyword>
<keyword id="KW-0281">Fimbrium</keyword>
<keyword id="KW-1185">Reference proteome</keyword>
<keyword id="KW-0732">Signal</keyword>
<protein>
    <recommendedName>
        <fullName>Uncharacterized fimbrial-like protein SfmF</fullName>
    </recommendedName>
</protein>